<reference key="1">
    <citation type="journal article" date="1999" name="Physiol. Genomics">
        <title>Cloning and analysis of unique human glutaminase isoforms generated by tissue-specific alternative splicing.</title>
        <authorList>
            <person name="Elgadi K.M."/>
            <person name="Meguid R.A."/>
            <person name="Qian M."/>
            <person name="Souba W.W."/>
            <person name="Abcouwer S.F."/>
        </authorList>
    </citation>
    <scope>NUCLEOTIDE SEQUENCE [MRNA] (ISOFORM 3)</scope>
    <scope>TISSUE SPECIFICITY</scope>
    <scope>ALTERNATIVE SPLICING</scope>
    <scope>FUNCTION</scope>
    <source>
        <tissue>Placenta</tissue>
    </source>
</reference>
<reference key="2">
    <citation type="journal article" date="1998" name="DNA Res.">
        <title>Prediction of the coding sequences of unidentified human genes. XII. The complete sequences of 100 new cDNA clones from brain which code for large proteins in vitro.</title>
        <authorList>
            <person name="Nagase T."/>
            <person name="Ishikawa K."/>
            <person name="Suyama M."/>
            <person name="Kikuno R."/>
            <person name="Hirosawa M."/>
            <person name="Miyajima N."/>
            <person name="Tanaka A."/>
            <person name="Kotani H."/>
            <person name="Nomura N."/>
            <person name="Ohara O."/>
        </authorList>
    </citation>
    <scope>NUCLEOTIDE SEQUENCE [LARGE SCALE MRNA] (ISOFORM 1)</scope>
    <source>
        <tissue>Brain</tissue>
    </source>
</reference>
<reference key="3">
    <citation type="submission" date="2000-01" db="EMBL/GenBank/DDBJ databases">
        <title>Identification and expression of human renal and hepatic glutaminase isoforms.</title>
        <authorList>
            <person name="Chavez R.A."/>
            <person name="Wang C."/>
            <person name="Cong R."/>
            <person name="Hawkinson J.E."/>
            <person name="Forsayeth J.R."/>
        </authorList>
    </citation>
    <scope>NUCLEOTIDE SEQUENCE [MRNA] (ISOFORM 1)</scope>
    <source>
        <tissue>Brain</tissue>
    </source>
</reference>
<reference key="4">
    <citation type="journal article" date="2000" name="Brain Res. Mol. Brain Res.">
        <title>Isolation, characterization and expression of a human brain mitochondrial glutaminase cDNA.</title>
        <authorList>
            <person name="Holcomb T."/>
            <person name="Taylor L."/>
            <person name="Trohkimoinen J."/>
            <person name="Curthoys N.P."/>
        </authorList>
    </citation>
    <scope>NUCLEOTIDE SEQUENCE [MRNA] (ISOFORM 1)</scope>
    <source>
        <tissue>Brain</tissue>
    </source>
</reference>
<reference key="5">
    <citation type="journal article" date="2004" name="Genome Res.">
        <title>The status, quality, and expansion of the NIH full-length cDNA project: the Mammalian Gene Collection (MGC).</title>
        <authorList>
            <consortium name="The MGC Project Team"/>
        </authorList>
    </citation>
    <scope>NUCLEOTIDE SEQUENCE [LARGE SCALE MRNA] (ISOFORM 1)</scope>
    <source>
        <tissue>Brain</tissue>
    </source>
</reference>
<reference key="6">
    <citation type="submission" date="2000-06" db="EMBL/GenBank/DDBJ databases">
        <title>Adenoma and carcinoma cell lines derived from colorectal tumours express different isoforms of glutaminase.</title>
        <authorList>
            <person name="Turner A."/>
            <person name="McGivan J.D."/>
        </authorList>
    </citation>
    <scope>NUCLEOTIDE SEQUENCE [MRNA] OF 225-466</scope>
    <source>
        <tissue>Colon carcinoma</tissue>
    </source>
</reference>
<reference key="7">
    <citation type="journal article" date="2004" name="Genome Biol.">
        <title>An unappreciated role for RNA surveillance.</title>
        <authorList>
            <person name="Hillman R.T."/>
            <person name="Green R.E."/>
            <person name="Brenner S.E."/>
        </authorList>
    </citation>
    <scope>SPLICE ISOFORM(S) THAT ARE POTENTIAL NMD TARGET(S)</scope>
</reference>
<reference key="8">
    <citation type="journal article" date="2006" name="J. Cell Sci.">
        <title>Brain-specific BNIP-2-homology protein Caytaxin relocalises glutaminase to neurite terminals and reduces glutamate levels.</title>
        <authorList>
            <person name="Buschdorf J.P."/>
            <person name="Li Chew L."/>
            <person name="Zhang B."/>
            <person name="Cao Q."/>
            <person name="Liang F.Y."/>
            <person name="Liou Y.C."/>
            <person name="Zhou Y.T."/>
            <person name="Low B.C."/>
        </authorList>
    </citation>
    <scope>INTERACTION WITH ATCAY</scope>
    <scope>SUBCELLULAR LOCATION</scope>
</reference>
<reference key="9">
    <citation type="journal article" date="2008" name="Neurochem. Res.">
        <title>Relative expression of mRNAs coding for glutaminase isoforms in CNS tissues and CNS tumors.</title>
        <authorList>
            <person name="Szeliga M."/>
            <person name="Matyja E."/>
            <person name="Obara M."/>
            <person name="Grajkowska W."/>
            <person name="Czernicki T."/>
            <person name="Albrecht J."/>
        </authorList>
    </citation>
    <scope>TISSUE SPECIFICITY (ISOFORM 1 AND ISOFORM 3)</scope>
</reference>
<reference key="10">
    <citation type="journal article" date="2009" name="Science">
        <title>Lysine acetylation targets protein complexes and co-regulates major cellular functions.</title>
        <authorList>
            <person name="Choudhary C."/>
            <person name="Kumar C."/>
            <person name="Gnad F."/>
            <person name="Nielsen M.L."/>
            <person name="Rehman M."/>
            <person name="Walther T.C."/>
            <person name="Olsen J.V."/>
            <person name="Mann M."/>
        </authorList>
    </citation>
    <scope>ACETYLATION [LARGE SCALE ANALYSIS] AT LYS-311</scope>
    <scope>IDENTIFICATION BY MASS SPECTROMETRY [LARGE SCALE ANALYSIS]</scope>
</reference>
<reference key="11">
    <citation type="journal article" date="2011" name="BMC Syst. Biol.">
        <title>Initial characterization of the human central proteome.</title>
        <authorList>
            <person name="Burkard T.R."/>
            <person name="Planyavsky M."/>
            <person name="Kaupe I."/>
            <person name="Breitwieser F.P."/>
            <person name="Buerckstuemmer T."/>
            <person name="Bennett K.L."/>
            <person name="Superti-Furga G."/>
            <person name="Colinge J."/>
        </authorList>
    </citation>
    <scope>IDENTIFICATION BY MASS SPECTROMETRY [LARGE SCALE ANALYSIS]</scope>
</reference>
<reference key="12">
    <citation type="journal article" date="2012" name="Proc. Natl. Acad. Sci. U.S.A.">
        <title>Mitochondrial localization and structure-based phosphate activation mechanism of glutaminase C with implications for cancer metabolism.</title>
        <authorList>
            <person name="Cassago A."/>
            <person name="Ferreira A.P."/>
            <person name="Ferreira I.M."/>
            <person name="Fornezari C."/>
            <person name="Gomes E.R."/>
            <person name="Greene K.S."/>
            <person name="Pereira H.M."/>
            <person name="Garratt R.C."/>
            <person name="Dias S.M."/>
            <person name="Ambrosio A.L."/>
        </authorList>
    </citation>
    <scope>SUBCELLULAR LOCATION</scope>
</reference>
<reference key="13">
    <citation type="journal article" date="2014" name="J. Proteomics">
        <title>An enzyme assisted RP-RPLC approach for in-depth analysis of human liver phosphoproteome.</title>
        <authorList>
            <person name="Bian Y."/>
            <person name="Song C."/>
            <person name="Cheng K."/>
            <person name="Dong M."/>
            <person name="Wang F."/>
            <person name="Huang J."/>
            <person name="Sun D."/>
            <person name="Wang L."/>
            <person name="Ye M."/>
            <person name="Zou H."/>
        </authorList>
    </citation>
    <scope>IDENTIFICATION BY MASS SPECTROMETRY [LARGE SCALE ANALYSIS]</scope>
    <source>
        <tissue>Liver</tissue>
    </source>
</reference>
<reference key="14">
    <citation type="journal article" date="2015" name="Proteomics">
        <title>N-terminome analysis of the human mitochondrial proteome.</title>
        <authorList>
            <person name="Vaca Jacome A.S."/>
            <person name="Rabilloud T."/>
            <person name="Schaeffer-Reiss C."/>
            <person name="Rompais M."/>
            <person name="Ayoub D."/>
            <person name="Lane L."/>
            <person name="Bairoch A."/>
            <person name="Van Dorsselaer A."/>
            <person name="Carapito C."/>
        </authorList>
    </citation>
    <scope>IDENTIFICATION BY MASS SPECTROMETRY [LARGE SCALE ANALYSIS]</scope>
</reference>
<reference key="15">
    <citation type="journal article" date="2019" name="JAMA Neurol.">
        <title>Identification of a loss-of-function mutation in the context of glutaminase deficiency and neonatal epileptic encephalopathy.</title>
        <authorList>
            <person name="Rumping L."/>
            <person name="Buettner B."/>
            <person name="Maier O."/>
            <person name="Rehmann H."/>
            <person name="Lequin M."/>
            <person name="Schlump J.U."/>
            <person name="Schmitt B."/>
            <person name="Schiebergen-Bronkhorst B."/>
            <person name="Prinsen H.C.M.T."/>
            <person name="Losa M."/>
            <person name="Fingerhut R."/>
            <person name="Lemke J.R."/>
            <person name="Zwartkruis F.J.T."/>
            <person name="Houwen R.H.J."/>
            <person name="Jans J.J.M."/>
            <person name="Verhoeven-Duif N.M."/>
            <person name="van Hasselt P.M."/>
            <person name="Jamra R."/>
        </authorList>
    </citation>
    <scope>FUNCTION</scope>
    <scope>INVOLVEMENT IN DEE71</scope>
    <scope>VARIANTS DEE71 81-GLN--LEU-669 DEL AND LYS-272</scope>
</reference>
<reference key="16">
    <citation type="journal article" date="2019" name="Hum. Mol. Genet.">
        <title>GLS hyperactivity causes glutamate excess, infantile cataract and profound developmental delay.</title>
        <authorList>
            <person name="Rumping L."/>
            <person name="Tessadori F."/>
            <person name="Pouwels P.J.W."/>
            <person name="Vringer E."/>
            <person name="Wijnen J.P."/>
            <person name="Bhogal A.A."/>
            <person name="Savelberg S.M.C."/>
            <person name="Duran K.J."/>
            <person name="Bakkers M.J.G."/>
            <person name="Ramos R.J.J."/>
            <person name="Schellekens P.A.W."/>
            <person name="Kroes H.Y."/>
            <person name="Klomp D.W.J."/>
            <person name="Black G.C.M."/>
            <person name="Taylor R.L."/>
            <person name="Bakkers J.P.W."/>
            <person name="Prinsen H.C.M.T."/>
            <person name="van der Knaap M.S."/>
            <person name="Dansen T.B."/>
            <person name="Rehmann H."/>
            <person name="Zwartkruis F.J.T."/>
            <person name="Houwen R.H.J."/>
            <person name="van Haaften G."/>
            <person name="Verhoeven-Duif N.M."/>
            <person name="Jans J.J.M."/>
            <person name="van Hasselt P.M."/>
        </authorList>
    </citation>
    <scope>FUNCTION</scope>
    <scope>INVOLVEMENT IN CASGID</scope>
    <scope>VARIANT CASGID CYS-482</scope>
    <scope>CHARACTERIZATION OF VARIANT CASGID CYS-482</scope>
</reference>
<reference key="17">
    <citation type="journal article" date="2019" name="N. Engl. J. Med.">
        <title>Glutaminase deficiency caused by short tandem repeat expansion in GLS.</title>
        <authorList>
            <person name="van Kuilenburg A.B.P."/>
            <person name="Tarailo-Graovac M."/>
            <person name="Richmond P.A."/>
            <person name="Droegemoeller B.I."/>
            <person name="Pouladi M.A."/>
            <person name="Leen R."/>
            <person name="Brand-Arzamendi K."/>
            <person name="Dobritzsch D."/>
            <person name="Dolzhenko E."/>
            <person name="Eberle M.A."/>
            <person name="Hayward B."/>
            <person name="Jones M.J."/>
            <person name="Karbassi F."/>
            <person name="Kobor M.S."/>
            <person name="Koster J."/>
            <person name="Kumari D."/>
            <person name="Li M."/>
            <person name="MacIsaac J."/>
            <person name="McDonald C."/>
            <person name="Meijer J."/>
            <person name="Nguyen C."/>
            <person name="Rajan-Babu I.S."/>
            <person name="Scherer S.W."/>
            <person name="Sim B."/>
            <person name="Trost B."/>
            <person name="Tseng L.A."/>
            <person name="Turkenburg M."/>
            <person name="van Vugt J.J.F.A."/>
            <person name="Veldink J.H."/>
            <person name="Walia J.S."/>
            <person name="Wang Y."/>
            <person name="van Weeghel M."/>
            <person name="Wright G.E.B."/>
            <person name="Xu X."/>
            <person name="Yuen R.K.C."/>
            <person name="Zhang J."/>
            <person name="Ross C.J."/>
            <person name="Wasserman W.W."/>
            <person name="Geraghty M.T."/>
            <person name="Santra S."/>
            <person name="Wanders R.J.A."/>
            <person name="Wen X.Y."/>
            <person name="Waterham H.R."/>
            <person name="Usdin K."/>
            <person name="van Karnebeek C.D.M."/>
        </authorList>
    </citation>
    <scope>FUNCTION</scope>
    <scope>INVOLVEMENT IN GDPAG</scope>
    <scope>VARIANT GDPAG LEU-313</scope>
    <scope>CHARACTERIZATION OF VARIANT GDPAG LEU-313</scope>
</reference>
<reference key="18">
    <citation type="journal article" date="2011" name="Biochemistry">
        <title>Full-length human glutaminase in complex with an allosteric inhibitor.</title>
        <authorList>
            <person name="DeLaBarre B."/>
            <person name="Gross S."/>
            <person name="Fang C."/>
            <person name="Gao Y."/>
            <person name="Jha A."/>
            <person name="Jiang F."/>
            <person name="Song J.J."/>
            <person name="Wei W."/>
            <person name="Hurov J.B."/>
        </authorList>
    </citation>
    <scope>X-RAY CRYSTALLOGRAPHY (2.30 ANGSTROMS) OF 71-550 (ISOFORM 3) IN COMPLEXES WITH GLUTAMATE AND SYNTHETIC INHIBITOR BPTES</scope>
    <scope>PROTEIN SEQUENCE OF N-TERMINUS</scope>
    <scope>CATALYTIC ACTIVITY</scope>
    <scope>MUTAGENESIS OF PHE-318; PHE-322 AND TYR-394</scope>
    <scope>BIOPHYSICOCHEMICAL PROPERTIES</scope>
    <scope>ACTIVITY REGULATION</scope>
    <scope>IDENTIFICATION BY MASS SPECTROMETRY</scope>
    <scope>SUBUNIT</scope>
</reference>
<reference evidence="24 26 27 28 29 30 31 32" key="19">
    <citation type="journal article" date="2012" name="Proc. Natl. Acad. Sci. U.S.A.">
        <title>Structural basis for the allosteric inhibitory mechanism of human kidney-type glutaminase (KGA) and its regulation by Raf-Mek-Erk signaling in cancer cell metabolism.</title>
        <authorList>
            <person name="Thangavelu K."/>
            <person name="Pan C.Q."/>
            <person name="Karlberg T."/>
            <person name="Balaji G."/>
            <person name="Uttamchandani M."/>
            <person name="Suresh V."/>
            <person name="Schuler H."/>
            <person name="Low B.C."/>
            <person name="Sivaraman J."/>
        </authorList>
    </citation>
    <scope>X-RAY CRYSTALLOGRAPHY (2.20 ANGSTROMS) OF 221-533 IN COMPLEXES WITH GLUTAMATE AND GLUTAMINE</scope>
    <scope>CATALYTIC ACTIVITY</scope>
    <scope>SUBUNIT</scope>
    <scope>INTERACTION WITH RAF1 AND MAP2K2</scope>
    <scope>MUTAGENESIS OF LEU-321; LEU-323 AND TYR-394</scope>
</reference>
<reference evidence="33" key="20">
    <citation type="journal article" date="2014" name="Sci. Rep.">
        <title>Structural basis for the active site inhibition mechanism of human kidney-type glutaminase (KGA).</title>
        <authorList>
            <person name="Thangavelu K."/>
            <person name="Chong Q.Y."/>
            <person name="Low B.C."/>
            <person name="Sivaraman J."/>
        </authorList>
    </citation>
    <scope>X-RAY CRYSTALLOGRAPHY (2.30 ANGSTROMS) OF 221-531 IN COMPLEX WITH SUBSTRATE ANALOG</scope>
    <scope>CATALYTIC ACTIVITY</scope>
    <scope>ACTIVITY REGULATION</scope>
    <scope>MUTAGENESIS OF TYR-249; SER-286; LYS-289 AND TYR-466</scope>
</reference>
<reference evidence="34 35 36 37" key="21">
    <citation type="journal article" date="2016" name="Bioorg. Med. Chem.">
        <title>Design and evaluation of novel glutaminase inhibitors.</title>
        <authorList>
            <person name="McDermott L.A."/>
            <person name="Iyer P."/>
            <person name="Vernetti L."/>
            <person name="Rimer S."/>
            <person name="Sun J."/>
            <person name="Boby M."/>
            <person name="Yang T."/>
            <person name="Fioravanti M."/>
            <person name="O'Neill J."/>
            <person name="Wang L."/>
            <person name="Drakes D."/>
            <person name="Katt W."/>
            <person name="Huang Q."/>
            <person name="Cerione R."/>
        </authorList>
    </citation>
    <scope>X-RAY CRYSTALLOGRAPHY (2.50 ANGSTROMS) OF 72-550</scope>
    <scope>CATALYTIC ACTIVITY</scope>
    <scope>SUBUNIT</scope>
</reference>
<reference evidence="38 39 40" key="22">
    <citation type="journal article" date="2017" name="J. Biol. Chem.">
        <title>The origin and evolution of human glutaminases and their atypical C-terminal ankyrin repeats.</title>
        <authorList>
            <person name="Pasquali C.C."/>
            <person name="Islam Z."/>
            <person name="Adamoski D."/>
            <person name="Ferreira I.M."/>
            <person name="Righeto R.D."/>
            <person name="Bettini J."/>
            <person name="Portugal R.V."/>
            <person name="Yue W.W."/>
            <person name="Gonzalez A."/>
            <person name="Dias S.M.G."/>
            <person name="Ambrosio A.L.B."/>
        </authorList>
    </citation>
    <scope>X-RAY CRYSTALLOGRAPHY (1.42 ANGSTROMS) OF 551-669</scope>
    <scope>CATALYTIC ACTIVITY</scope>
    <scope>DOMAIN</scope>
    <scope>SUBUNIT</scope>
</reference>
<reference evidence="41" key="23">
    <citation type="journal article" date="2018" name="J. Biol. Chem.">
        <title>Characterization of the interactions of potent allosteric inhibitors with glutaminase C, a key enzyme in cancer cell glutamine metabolism.</title>
        <authorList>
            <person name="Huang Q."/>
            <person name="Stalnecker C."/>
            <person name="Zhang C."/>
            <person name="McDermott L.A."/>
            <person name="Iyer P."/>
            <person name="O'Neill J."/>
            <person name="Reimer S."/>
            <person name="Cerione R.A."/>
            <person name="Katt W.P."/>
        </authorList>
    </citation>
    <scope>X-RAY CRYSTALLOGRAPHY (2.44 ANGSTROMS) OF 72-550</scope>
    <scope>CATALYTIC ACTIVITY</scope>
    <scope>SUBUNIT</scope>
</reference>
<evidence type="ECO:0000250" key="1">
    <source>
        <dbReference type="UniProtKB" id="D3Z7P3"/>
    </source>
</evidence>
<evidence type="ECO:0000250" key="2">
    <source>
        <dbReference type="UniProtKB" id="P13264"/>
    </source>
</evidence>
<evidence type="ECO:0000256" key="3">
    <source>
        <dbReference type="SAM" id="MobiDB-lite"/>
    </source>
</evidence>
<evidence type="ECO:0000269" key="4">
    <source>
    </source>
</evidence>
<evidence type="ECO:0000269" key="5">
    <source>
    </source>
</evidence>
<evidence type="ECO:0000269" key="6">
    <source>
    </source>
</evidence>
<evidence type="ECO:0000269" key="7">
    <source>
    </source>
</evidence>
<evidence type="ECO:0000269" key="8">
    <source>
    </source>
</evidence>
<evidence type="ECO:0000269" key="9">
    <source>
    </source>
</evidence>
<evidence type="ECO:0000269" key="10">
    <source>
    </source>
</evidence>
<evidence type="ECO:0000269" key="11">
    <source>
    </source>
</evidence>
<evidence type="ECO:0000269" key="12">
    <source>
    </source>
</evidence>
<evidence type="ECO:0000269" key="13">
    <source>
    </source>
</evidence>
<evidence type="ECO:0000269" key="14">
    <source>
    </source>
</evidence>
<evidence type="ECO:0000269" key="15">
    <source>
    </source>
</evidence>
<evidence type="ECO:0000269" key="16">
    <source>
    </source>
</evidence>
<evidence type="ECO:0000303" key="17">
    <source>
    </source>
</evidence>
<evidence type="ECO:0000303" key="18">
    <source>
    </source>
</evidence>
<evidence type="ECO:0000303" key="19">
    <source>
    </source>
</evidence>
<evidence type="ECO:0000303" key="20">
    <source>
    </source>
</evidence>
<evidence type="ECO:0000305" key="21"/>
<evidence type="ECO:0000305" key="22">
    <source>
    </source>
</evidence>
<evidence type="ECO:0000305" key="23">
    <source>
    </source>
</evidence>
<evidence type="ECO:0007744" key="24">
    <source>
        <dbReference type="PDB" id="3CZD"/>
    </source>
</evidence>
<evidence type="ECO:0007744" key="25">
    <source>
        <dbReference type="PDB" id="3UNW"/>
    </source>
</evidence>
<evidence type="ECO:0007744" key="26">
    <source>
        <dbReference type="PDB" id="3VOY"/>
    </source>
</evidence>
<evidence type="ECO:0007744" key="27">
    <source>
        <dbReference type="PDB" id="3VOZ"/>
    </source>
</evidence>
<evidence type="ECO:0007744" key="28">
    <source>
        <dbReference type="PDB" id="3VP0"/>
    </source>
</evidence>
<evidence type="ECO:0007744" key="29">
    <source>
        <dbReference type="PDB" id="3VP1"/>
    </source>
</evidence>
<evidence type="ECO:0007744" key="30">
    <source>
        <dbReference type="PDB" id="3VP2"/>
    </source>
</evidence>
<evidence type="ECO:0007744" key="31">
    <source>
        <dbReference type="PDB" id="3VP3"/>
    </source>
</evidence>
<evidence type="ECO:0007744" key="32">
    <source>
        <dbReference type="PDB" id="3VP4"/>
    </source>
</evidence>
<evidence type="ECO:0007744" key="33">
    <source>
        <dbReference type="PDB" id="4O7D"/>
    </source>
</evidence>
<evidence type="ECO:0007744" key="34">
    <source>
        <dbReference type="PDB" id="5FI2"/>
    </source>
</evidence>
<evidence type="ECO:0007744" key="35">
    <source>
        <dbReference type="PDB" id="5FI6"/>
    </source>
</evidence>
<evidence type="ECO:0007744" key="36">
    <source>
        <dbReference type="PDB" id="5FI7"/>
    </source>
</evidence>
<evidence type="ECO:0007744" key="37">
    <source>
        <dbReference type="PDB" id="5I94"/>
    </source>
</evidence>
<evidence type="ECO:0007744" key="38">
    <source>
        <dbReference type="PDB" id="5U0I"/>
    </source>
</evidence>
<evidence type="ECO:0007744" key="39">
    <source>
        <dbReference type="PDB" id="5U0J"/>
    </source>
</evidence>
<evidence type="ECO:0007744" key="40">
    <source>
        <dbReference type="PDB" id="5UQE"/>
    </source>
</evidence>
<evidence type="ECO:0007744" key="41">
    <source>
        <dbReference type="PDB" id="5WJ6"/>
    </source>
</evidence>
<evidence type="ECO:0007744" key="42">
    <source>
    </source>
</evidence>
<evidence type="ECO:0007829" key="43">
    <source>
        <dbReference type="PDB" id="3VOY"/>
    </source>
</evidence>
<evidence type="ECO:0007829" key="44">
    <source>
        <dbReference type="PDB" id="5D3O"/>
    </source>
</evidence>
<evidence type="ECO:0007829" key="45">
    <source>
        <dbReference type="PDB" id="5JYO"/>
    </source>
</evidence>
<evidence type="ECO:0007829" key="46">
    <source>
        <dbReference type="PDB" id="5U0I"/>
    </source>
</evidence>
<evidence type="ECO:0007829" key="47">
    <source>
        <dbReference type="PDB" id="5WJ6"/>
    </source>
</evidence>
<evidence type="ECO:0007829" key="48">
    <source>
        <dbReference type="PDB" id="6LOX"/>
    </source>
</evidence>
<evidence type="ECO:0007829" key="49">
    <source>
        <dbReference type="PDB" id="6UMF"/>
    </source>
</evidence>
<evidence type="ECO:0007829" key="50">
    <source>
        <dbReference type="PDB" id="7SBN"/>
    </source>
</evidence>
<evidence type="ECO:0007829" key="51">
    <source>
        <dbReference type="PDB" id="8GWR"/>
    </source>
</evidence>
<evidence type="ECO:0007829" key="52">
    <source>
        <dbReference type="PDB" id="8IMA"/>
    </source>
</evidence>
<evidence type="ECO:0007829" key="53">
    <source>
        <dbReference type="PDB" id="8JUB"/>
    </source>
</evidence>
<organism>
    <name type="scientific">Homo sapiens</name>
    <name type="common">Human</name>
    <dbReference type="NCBI Taxonomy" id="9606"/>
    <lineage>
        <taxon>Eukaryota</taxon>
        <taxon>Metazoa</taxon>
        <taxon>Chordata</taxon>
        <taxon>Craniata</taxon>
        <taxon>Vertebrata</taxon>
        <taxon>Euteleostomi</taxon>
        <taxon>Mammalia</taxon>
        <taxon>Eutheria</taxon>
        <taxon>Euarchontoglires</taxon>
        <taxon>Primates</taxon>
        <taxon>Haplorrhini</taxon>
        <taxon>Catarrhini</taxon>
        <taxon>Hominidae</taxon>
        <taxon>Homo</taxon>
    </lineage>
</organism>
<name>GLSK_HUMAN</name>
<gene>
    <name type="primary">GLS</name>
    <name type="synonym">GLS1</name>
    <name type="synonym">KIAA0838</name>
</gene>
<keyword id="KW-0002">3D-structure</keyword>
<keyword id="KW-0007">Acetylation</keyword>
<keyword id="KW-0025">Alternative splicing</keyword>
<keyword id="KW-0040">ANK repeat</keyword>
<keyword id="KW-0898">Cataract</keyword>
<keyword id="KW-0963">Cytoplasm</keyword>
<keyword id="KW-0903">Direct protein sequencing</keyword>
<keyword id="KW-0225">Disease variant</keyword>
<keyword id="KW-0887">Epilepsy</keyword>
<keyword id="KW-0378">Hydrolase</keyword>
<keyword id="KW-0496">Mitochondrion</keyword>
<keyword id="KW-0597">Phosphoprotein</keyword>
<keyword id="KW-1267">Proteomics identification</keyword>
<keyword id="KW-1185">Reference proteome</keyword>
<keyword id="KW-0677">Repeat</keyword>
<keyword id="KW-0809">Transit peptide</keyword>
<dbReference type="EC" id="3.5.1.2" evidence="7 9 10 11 12 13"/>
<dbReference type="EMBL" id="AF158555">
    <property type="protein sequence ID" value="AAD47056.1"/>
    <property type="molecule type" value="mRNA"/>
</dbReference>
<dbReference type="EMBL" id="AF097492">
    <property type="protein sequence ID" value="AAF00088.1"/>
    <property type="molecule type" value="mRNA"/>
</dbReference>
<dbReference type="EMBL" id="AF097493">
    <property type="protein sequence ID" value="AAF00089.1"/>
    <property type="molecule type" value="mRNA"/>
</dbReference>
<dbReference type="EMBL" id="AF097495">
    <property type="protein sequence ID" value="AAF00090.1"/>
    <property type="molecule type" value="mRNA"/>
</dbReference>
<dbReference type="EMBL" id="AB020645">
    <property type="protein sequence ID" value="BAA74861.2"/>
    <property type="status" value="ALT_INIT"/>
    <property type="molecule type" value="mRNA"/>
</dbReference>
<dbReference type="EMBL" id="AF223943">
    <property type="protein sequence ID" value="AAF33825.1"/>
    <property type="molecule type" value="mRNA"/>
</dbReference>
<dbReference type="EMBL" id="AF327434">
    <property type="protein sequence ID" value="AAG47842.1"/>
    <property type="molecule type" value="mRNA"/>
</dbReference>
<dbReference type="EMBL" id="BC038507">
    <property type="protein sequence ID" value="AAH38507.2"/>
    <property type="molecule type" value="mRNA"/>
</dbReference>
<dbReference type="EMBL" id="AF279697">
    <property type="protein sequence ID" value="AAG17700.1"/>
    <property type="molecule type" value="mRNA"/>
</dbReference>
<dbReference type="CCDS" id="CCDS2308.1">
    <molecule id="O94925-1"/>
</dbReference>
<dbReference type="CCDS" id="CCDS58744.1">
    <molecule id="O94925-3"/>
</dbReference>
<dbReference type="RefSeq" id="NP_001243239.1">
    <molecule id="O94925-3"/>
    <property type="nucleotide sequence ID" value="NM_001256310.2"/>
</dbReference>
<dbReference type="RefSeq" id="NP_055720.3">
    <molecule id="O94925-1"/>
    <property type="nucleotide sequence ID" value="NM_014905.4"/>
</dbReference>
<dbReference type="PDB" id="3CZD">
    <property type="method" value="X-ray"/>
    <property type="resolution" value="2.40 A"/>
    <property type="chains" value="A=221-533"/>
</dbReference>
<dbReference type="PDB" id="3UNW">
    <property type="method" value="X-ray"/>
    <property type="resolution" value="2.56 A"/>
    <property type="chains" value="A/B/C/D=71-597"/>
</dbReference>
<dbReference type="PDB" id="3UO9">
    <property type="method" value="X-ray"/>
    <property type="resolution" value="2.30 A"/>
    <property type="chains" value="A/B/C/D=71-597"/>
</dbReference>
<dbReference type="PDB" id="3VOY">
    <property type="method" value="X-ray"/>
    <property type="resolution" value="2.20 A"/>
    <property type="chains" value="A=221-533"/>
</dbReference>
<dbReference type="PDB" id="3VOZ">
    <property type="method" value="X-ray"/>
    <property type="resolution" value="2.40 A"/>
    <property type="chains" value="A=221-533"/>
</dbReference>
<dbReference type="PDB" id="3VP0">
    <property type="method" value="X-ray"/>
    <property type="resolution" value="2.40 A"/>
    <property type="chains" value="A=221-533"/>
</dbReference>
<dbReference type="PDB" id="3VP1">
    <property type="method" value="X-ray"/>
    <property type="resolution" value="2.30 A"/>
    <property type="chains" value="A=221-533"/>
</dbReference>
<dbReference type="PDB" id="3VP2">
    <property type="method" value="X-ray"/>
    <property type="resolution" value="2.70 A"/>
    <property type="chains" value="A=221-533"/>
</dbReference>
<dbReference type="PDB" id="3VP3">
    <property type="method" value="X-ray"/>
    <property type="resolution" value="2.70 A"/>
    <property type="chains" value="A=221-533"/>
</dbReference>
<dbReference type="PDB" id="3VP4">
    <property type="method" value="X-ray"/>
    <property type="resolution" value="2.45 A"/>
    <property type="chains" value="A=221-533"/>
</dbReference>
<dbReference type="PDB" id="4O7D">
    <property type="method" value="X-ray"/>
    <property type="resolution" value="2.30 A"/>
    <property type="chains" value="A=221-531"/>
</dbReference>
<dbReference type="PDB" id="5D3O">
    <property type="method" value="X-ray"/>
    <property type="resolution" value="2.79 A"/>
    <property type="chains" value="A/B=72-597"/>
</dbReference>
<dbReference type="PDB" id="5FI2">
    <property type="method" value="X-ray"/>
    <property type="resolution" value="2.50 A"/>
    <property type="chains" value="A/B/C/D=72-597"/>
</dbReference>
<dbReference type="PDB" id="5FI6">
    <property type="method" value="X-ray"/>
    <property type="resolution" value="2.52 A"/>
    <property type="chains" value="A/B/C/D=72-597"/>
</dbReference>
<dbReference type="PDB" id="5FI7">
    <property type="method" value="X-ray"/>
    <property type="resolution" value="2.50 A"/>
    <property type="chains" value="A/B/C/D=72-597"/>
</dbReference>
<dbReference type="PDB" id="5HL1">
    <property type="method" value="X-ray"/>
    <property type="resolution" value="2.40 A"/>
    <property type="chains" value="A/B/C/D=72-597"/>
</dbReference>
<dbReference type="PDB" id="5I94">
    <property type="method" value="X-ray"/>
    <property type="resolution" value="2.98 A"/>
    <property type="chains" value="A/B/C/D=72-597"/>
</dbReference>
<dbReference type="PDB" id="5JYO">
    <property type="method" value="X-ray"/>
    <property type="resolution" value="2.10 A"/>
    <property type="chains" value="A/B/C/D/E/F/G/H=221-533"/>
</dbReference>
<dbReference type="PDB" id="5JYP">
    <property type="method" value="X-ray"/>
    <property type="resolution" value="2.74 A"/>
    <property type="chains" value="A=221-533"/>
</dbReference>
<dbReference type="PDB" id="5U0I">
    <property type="method" value="X-ray"/>
    <property type="resolution" value="1.42 A"/>
    <property type="chains" value="A/B=551-669"/>
</dbReference>
<dbReference type="PDB" id="5U0J">
    <property type="method" value="X-ray"/>
    <property type="resolution" value="1.72 A"/>
    <property type="chains" value="A/B/C/D=551-669"/>
</dbReference>
<dbReference type="PDB" id="5UQE">
    <property type="method" value="X-ray"/>
    <property type="resolution" value="3.60 A"/>
    <property type="chains" value="A/B/C/D/F=137-656"/>
</dbReference>
<dbReference type="PDB" id="5WJ6">
    <property type="method" value="X-ray"/>
    <property type="resolution" value="2.44 A"/>
    <property type="chains" value="A/B/C/D=72-550"/>
</dbReference>
<dbReference type="PDB" id="6LOX">
    <property type="method" value="X-ray"/>
    <property type="resolution" value="3.20 A"/>
    <property type="chains" value="A/B/C/D=71-600"/>
</dbReference>
<dbReference type="PDB" id="6UJG">
    <property type="method" value="X-ray"/>
    <property type="resolution" value="3.00 A"/>
    <property type="chains" value="A/B/C/D/E/F/G/H=72-550"/>
</dbReference>
<dbReference type="PDB" id="6UJM">
    <property type="method" value="X-ray"/>
    <property type="resolution" value="2.50 A"/>
    <property type="chains" value="A/B/C/D=72-550"/>
</dbReference>
<dbReference type="PDB" id="6UK6">
    <property type="method" value="X-ray"/>
    <property type="resolution" value="2.90 A"/>
    <property type="chains" value="A/B/C/D=72-550"/>
</dbReference>
<dbReference type="PDB" id="6UKB">
    <property type="method" value="X-ray"/>
    <property type="resolution" value="3.00 A"/>
    <property type="chains" value="A/B/C/D=72-550"/>
</dbReference>
<dbReference type="PDB" id="6UL9">
    <property type="method" value="X-ray"/>
    <property type="resolution" value="2.50 A"/>
    <property type="chains" value="A/B/C/D=72-550"/>
</dbReference>
<dbReference type="PDB" id="6ULA">
    <property type="method" value="X-ray"/>
    <property type="resolution" value="2.95 A"/>
    <property type="chains" value="A/B/C/D/E/F/G/H=72-550"/>
</dbReference>
<dbReference type="PDB" id="6ULJ">
    <property type="method" value="X-ray"/>
    <property type="resolution" value="2.69 A"/>
    <property type="chains" value="A/B/C/D=72-550"/>
</dbReference>
<dbReference type="PDB" id="6UMC">
    <property type="method" value="X-ray"/>
    <property type="resolution" value="2.75 A"/>
    <property type="chains" value="A/B/C/D=72-550"/>
</dbReference>
<dbReference type="PDB" id="6UMD">
    <property type="method" value="X-ray"/>
    <property type="resolution" value="2.70 A"/>
    <property type="chains" value="A/B/C/D=72-550"/>
</dbReference>
<dbReference type="PDB" id="6UME">
    <property type="method" value="X-ray"/>
    <property type="resolution" value="2.90 A"/>
    <property type="chains" value="A/B/C/D=72-550"/>
</dbReference>
<dbReference type="PDB" id="6UMF">
    <property type="method" value="X-ray"/>
    <property type="resolution" value="2.68 A"/>
    <property type="chains" value="A/B/C/D=72-550"/>
</dbReference>
<dbReference type="PDB" id="7REN">
    <property type="method" value="X-ray"/>
    <property type="resolution" value="2.80 A"/>
    <property type="chains" value="A/B/C/D=72-550"/>
</dbReference>
<dbReference type="PDB" id="7RGG">
    <property type="method" value="X-ray"/>
    <property type="resolution" value="3.00 A"/>
    <property type="chains" value="A/B/C/D=72-550"/>
</dbReference>
<dbReference type="PDB" id="7SBM">
    <property type="method" value="X-ray"/>
    <property type="resolution" value="2.80 A"/>
    <property type="chains" value="A/B/C/D=72-550"/>
</dbReference>
<dbReference type="PDB" id="7SBN">
    <property type="method" value="X-ray"/>
    <property type="resolution" value="2.14 A"/>
    <property type="chains" value="A/B/C/D=72-550"/>
</dbReference>
<dbReference type="PDB" id="8BSK">
    <property type="method" value="X-ray"/>
    <property type="resolution" value="2.10 A"/>
    <property type="chains" value="A=221-533"/>
</dbReference>
<dbReference type="PDB" id="8BSL">
    <property type="method" value="X-ray"/>
    <property type="resolution" value="2.38 A"/>
    <property type="chains" value="A/B/C/D=123-550"/>
</dbReference>
<dbReference type="PDB" id="8BSM">
    <property type="method" value="X-ray"/>
    <property type="resolution" value="2.78 A"/>
    <property type="chains" value="A=221-533"/>
</dbReference>
<dbReference type="PDB" id="8BSN">
    <property type="method" value="X-ray"/>
    <property type="resolution" value="2.49 A"/>
    <property type="chains" value="A=221-533"/>
</dbReference>
<dbReference type="PDB" id="8GWR">
    <property type="method" value="X-ray"/>
    <property type="resolution" value="2.80 A"/>
    <property type="chains" value="A/B=1-669"/>
</dbReference>
<dbReference type="PDB" id="8IMA">
    <property type="method" value="EM"/>
    <property type="resolution" value="2.90 A"/>
    <property type="chains" value="A/B/C/D=123-550"/>
</dbReference>
<dbReference type="PDB" id="8IMB">
    <property type="method" value="EM"/>
    <property type="resolution" value="2.90 A"/>
    <property type="chains" value="A/B/C/D=123-550"/>
</dbReference>
<dbReference type="PDB" id="8JUB">
    <property type="method" value="X-ray"/>
    <property type="resolution" value="2.01 A"/>
    <property type="chains" value="A/B/C/D=71-550"/>
</dbReference>
<dbReference type="PDB" id="8JUE">
    <property type="method" value="X-ray"/>
    <property type="resolution" value="2.39 A"/>
    <property type="chains" value="A/B/C/D=71-550"/>
</dbReference>
<dbReference type="PDB" id="8SZJ">
    <property type="method" value="EM"/>
    <property type="resolution" value="3.35 A"/>
    <property type="chains" value="A/B/C/D/E/F/G/H/I/J/K/L=1-550"/>
</dbReference>
<dbReference type="PDBsum" id="3CZD"/>
<dbReference type="PDBsum" id="3UNW"/>
<dbReference type="PDBsum" id="3UO9"/>
<dbReference type="PDBsum" id="3VOY"/>
<dbReference type="PDBsum" id="3VOZ"/>
<dbReference type="PDBsum" id="3VP0"/>
<dbReference type="PDBsum" id="3VP1"/>
<dbReference type="PDBsum" id="3VP2"/>
<dbReference type="PDBsum" id="3VP3"/>
<dbReference type="PDBsum" id="3VP4"/>
<dbReference type="PDBsum" id="4O7D"/>
<dbReference type="PDBsum" id="5D3O"/>
<dbReference type="PDBsum" id="5FI2"/>
<dbReference type="PDBsum" id="5FI6"/>
<dbReference type="PDBsum" id="5FI7"/>
<dbReference type="PDBsum" id="5HL1"/>
<dbReference type="PDBsum" id="5I94"/>
<dbReference type="PDBsum" id="5JYO"/>
<dbReference type="PDBsum" id="5JYP"/>
<dbReference type="PDBsum" id="5U0I"/>
<dbReference type="PDBsum" id="5U0J"/>
<dbReference type="PDBsum" id="5UQE"/>
<dbReference type="PDBsum" id="5WJ6"/>
<dbReference type="PDBsum" id="6LOX"/>
<dbReference type="PDBsum" id="6UJG"/>
<dbReference type="PDBsum" id="6UJM"/>
<dbReference type="PDBsum" id="6UK6"/>
<dbReference type="PDBsum" id="6UKB"/>
<dbReference type="PDBsum" id="6UL9"/>
<dbReference type="PDBsum" id="6ULA"/>
<dbReference type="PDBsum" id="6ULJ"/>
<dbReference type="PDBsum" id="6UMC"/>
<dbReference type="PDBsum" id="6UMD"/>
<dbReference type="PDBsum" id="6UME"/>
<dbReference type="PDBsum" id="6UMF"/>
<dbReference type="PDBsum" id="7REN"/>
<dbReference type="PDBsum" id="7RGG"/>
<dbReference type="PDBsum" id="7SBM"/>
<dbReference type="PDBsum" id="7SBN"/>
<dbReference type="PDBsum" id="8BSK"/>
<dbReference type="PDBsum" id="8BSL"/>
<dbReference type="PDBsum" id="8BSM"/>
<dbReference type="PDBsum" id="8BSN"/>
<dbReference type="PDBsum" id="8GWR"/>
<dbReference type="PDBsum" id="8IMA"/>
<dbReference type="PDBsum" id="8IMB"/>
<dbReference type="PDBsum" id="8JUB"/>
<dbReference type="PDBsum" id="8JUE"/>
<dbReference type="PDBsum" id="8SZJ"/>
<dbReference type="EMDB" id="EMD-35573"/>
<dbReference type="EMDB" id="EMD-35574"/>
<dbReference type="EMDB" id="EMD-40918"/>
<dbReference type="SMR" id="O94925"/>
<dbReference type="BioGRID" id="109006">
    <property type="interactions" value="230"/>
</dbReference>
<dbReference type="DIP" id="DIP-50591N"/>
<dbReference type="FunCoup" id="O94925">
    <property type="interactions" value="2085"/>
</dbReference>
<dbReference type="IntAct" id="O94925">
    <property type="interactions" value="106"/>
</dbReference>
<dbReference type="MINT" id="O94925"/>
<dbReference type="STRING" id="9606.ENSP00000317379"/>
<dbReference type="BindingDB" id="O94925"/>
<dbReference type="ChEMBL" id="CHEMBL2146302"/>
<dbReference type="DrugBank" id="DB13155">
    <property type="generic name" value="Esculin"/>
</dbReference>
<dbReference type="DrugBank" id="DB00142">
    <property type="generic name" value="Glutamic acid"/>
</dbReference>
<dbReference type="DrugBank" id="DB00130">
    <property type="generic name" value="L-Glutamine"/>
</dbReference>
<dbReference type="DrugBank" id="DB15232">
    <property type="generic name" value="Telaglenastat"/>
</dbReference>
<dbReference type="GuidetoPHARMACOLOGY" id="2891"/>
<dbReference type="GlyConnect" id="2043">
    <property type="glycosylation" value="3 N-Linked glycans (1 site)"/>
</dbReference>
<dbReference type="GlyCosmos" id="O94925">
    <property type="glycosylation" value="1 site, 6 glycans"/>
</dbReference>
<dbReference type="GlyGen" id="O94925">
    <property type="glycosylation" value="2 sites, 6 N-linked glycans (1 site), 1 O-linked glycan (1 site)"/>
</dbReference>
<dbReference type="iPTMnet" id="O94925"/>
<dbReference type="PhosphoSitePlus" id="O94925"/>
<dbReference type="SwissPalm" id="O94925"/>
<dbReference type="BioMuta" id="GLS"/>
<dbReference type="CPTAC" id="CPTAC-516"/>
<dbReference type="CPTAC" id="CPTAC-517"/>
<dbReference type="jPOST" id="O94925"/>
<dbReference type="MassIVE" id="O94925"/>
<dbReference type="PaxDb" id="9606-ENSP00000317379"/>
<dbReference type="PeptideAtlas" id="O94925"/>
<dbReference type="ProteomicsDB" id="50560">
    <molecule id="O94925-1"/>
</dbReference>
<dbReference type="ProteomicsDB" id="50561">
    <molecule id="O94925-2"/>
</dbReference>
<dbReference type="ProteomicsDB" id="50562">
    <molecule id="O94925-3"/>
</dbReference>
<dbReference type="Pumba" id="O94925"/>
<dbReference type="TopDownProteomics" id="O94925-2">
    <molecule id="O94925-2"/>
</dbReference>
<dbReference type="Antibodypedia" id="34041">
    <property type="antibodies" value="458 antibodies from 33 providers"/>
</dbReference>
<dbReference type="DNASU" id="2744"/>
<dbReference type="Ensembl" id="ENST00000320717.8">
    <molecule id="O94925-1"/>
    <property type="protein sequence ID" value="ENSP00000317379.3"/>
    <property type="gene ID" value="ENSG00000115419.14"/>
</dbReference>
<dbReference type="Ensembl" id="ENST00000338435.9">
    <molecule id="O94925-3"/>
    <property type="protein sequence ID" value="ENSP00000340689.4"/>
    <property type="gene ID" value="ENSG00000115419.14"/>
</dbReference>
<dbReference type="GeneID" id="2744"/>
<dbReference type="KEGG" id="hsa:2744"/>
<dbReference type="MANE-Select" id="ENST00000320717.8">
    <property type="protein sequence ID" value="ENSP00000317379.3"/>
    <property type="RefSeq nucleotide sequence ID" value="NM_014905.5"/>
    <property type="RefSeq protein sequence ID" value="NP_055720.3"/>
</dbReference>
<dbReference type="UCSC" id="uc002use.4">
    <molecule id="O94925-1"/>
    <property type="organism name" value="human"/>
</dbReference>
<dbReference type="AGR" id="HGNC:4331"/>
<dbReference type="CTD" id="2744"/>
<dbReference type="DisGeNET" id="2744"/>
<dbReference type="GeneCards" id="GLS"/>
<dbReference type="HGNC" id="HGNC:4331">
    <property type="gene designation" value="GLS"/>
</dbReference>
<dbReference type="HPA" id="ENSG00000115419">
    <property type="expression patterns" value="Tissue enhanced (kidney)"/>
</dbReference>
<dbReference type="MalaCards" id="GLS"/>
<dbReference type="MIM" id="138280">
    <property type="type" value="gene"/>
</dbReference>
<dbReference type="MIM" id="618328">
    <property type="type" value="phenotype"/>
</dbReference>
<dbReference type="MIM" id="618339">
    <property type="type" value="phenotype"/>
</dbReference>
<dbReference type="MIM" id="618412">
    <property type="type" value="phenotype"/>
</dbReference>
<dbReference type="neXtProt" id="NX_O94925"/>
<dbReference type="OpenTargets" id="ENSG00000115419"/>
<dbReference type="Orphanet" id="557064">
    <property type="disease" value="Neonatal epileptic encephalopathy due to glutaminase deficiency"/>
</dbReference>
<dbReference type="Orphanet" id="557056">
    <property type="disease" value="Spastic ataxia-dysarthria due to glutaminase deficiency"/>
</dbReference>
<dbReference type="PharmGKB" id="PA28734"/>
<dbReference type="VEuPathDB" id="HostDB:ENSG00000115419"/>
<dbReference type="eggNOG" id="KOG0506">
    <property type="taxonomic scope" value="Eukaryota"/>
</dbReference>
<dbReference type="GeneTree" id="ENSGT00390000010463"/>
<dbReference type="HOGENOM" id="CLU_016439_1_0_1"/>
<dbReference type="InParanoid" id="O94925"/>
<dbReference type="OMA" id="FACPLSG"/>
<dbReference type="OrthoDB" id="9523293at2759"/>
<dbReference type="PAN-GO" id="O94925">
    <property type="GO annotations" value="3 GO annotations based on evolutionary models"/>
</dbReference>
<dbReference type="PhylomeDB" id="O94925"/>
<dbReference type="TreeFam" id="TF313359"/>
<dbReference type="BRENDA" id="3.5.1.2">
    <property type="organism ID" value="2681"/>
</dbReference>
<dbReference type="PathwayCommons" id="O94925"/>
<dbReference type="Reactome" id="R-HSA-210500">
    <property type="pathway name" value="Glutamate Neurotransmitter Release Cycle"/>
</dbReference>
<dbReference type="Reactome" id="R-HSA-5628897">
    <property type="pathway name" value="TP53 Regulates Metabolic Genes"/>
</dbReference>
<dbReference type="Reactome" id="R-HSA-8964539">
    <property type="pathway name" value="Glutamate and glutamine metabolism"/>
</dbReference>
<dbReference type="SABIO-RK" id="O94925"/>
<dbReference type="SignaLink" id="O94925"/>
<dbReference type="SIGNOR" id="O94925"/>
<dbReference type="BioGRID-ORCS" id="2744">
    <property type="hits" value="39 hits in 1154 CRISPR screens"/>
</dbReference>
<dbReference type="CD-CODE" id="FB4E32DD">
    <property type="entry name" value="Presynaptic clusters and postsynaptic densities"/>
</dbReference>
<dbReference type="ChiTaRS" id="GLS">
    <property type="organism name" value="human"/>
</dbReference>
<dbReference type="EvolutionaryTrace" id="O94925"/>
<dbReference type="GenomeRNAi" id="2744"/>
<dbReference type="Pharos" id="O94925">
    <property type="development level" value="Tchem"/>
</dbReference>
<dbReference type="PRO" id="PR:O94925"/>
<dbReference type="Proteomes" id="UP000005640">
    <property type="component" value="Chromosome 2"/>
</dbReference>
<dbReference type="RNAct" id="O94925">
    <property type="molecule type" value="protein"/>
</dbReference>
<dbReference type="Bgee" id="ENSG00000115419">
    <property type="expression patterns" value="Expressed in middle temporal gyrus and 203 other cell types or tissues"/>
</dbReference>
<dbReference type="ExpressionAtlas" id="O94925">
    <property type="expression patterns" value="baseline and differential"/>
</dbReference>
<dbReference type="GO" id="GO:0005829">
    <property type="term" value="C:cytosol"/>
    <property type="evidence" value="ECO:0007669"/>
    <property type="project" value="UniProtKB-SubCell"/>
</dbReference>
<dbReference type="GO" id="GO:0005759">
    <property type="term" value="C:mitochondrial matrix"/>
    <property type="evidence" value="ECO:0000304"/>
    <property type="project" value="Reactome"/>
</dbReference>
<dbReference type="GO" id="GO:0005739">
    <property type="term" value="C:mitochondrion"/>
    <property type="evidence" value="ECO:0000314"/>
    <property type="project" value="HPA"/>
</dbReference>
<dbReference type="GO" id="GO:0045202">
    <property type="term" value="C:synapse"/>
    <property type="evidence" value="ECO:0007669"/>
    <property type="project" value="GOC"/>
</dbReference>
<dbReference type="GO" id="GO:0004359">
    <property type="term" value="F:glutaminase activity"/>
    <property type="evidence" value="ECO:0000314"/>
    <property type="project" value="UniProtKB"/>
</dbReference>
<dbReference type="GO" id="GO:0007268">
    <property type="term" value="P:chemical synaptic transmission"/>
    <property type="evidence" value="ECO:0007669"/>
    <property type="project" value="Ensembl"/>
</dbReference>
<dbReference type="GO" id="GO:0006537">
    <property type="term" value="P:glutamate biosynthetic process"/>
    <property type="evidence" value="ECO:0000314"/>
    <property type="project" value="UniProtKB"/>
</dbReference>
<dbReference type="GO" id="GO:0006543">
    <property type="term" value="P:glutamine catabolic process"/>
    <property type="evidence" value="ECO:0000314"/>
    <property type="project" value="UniProtKB"/>
</dbReference>
<dbReference type="GO" id="GO:0090461">
    <property type="term" value="P:intracellular glutamate homeostasis"/>
    <property type="evidence" value="ECO:0000315"/>
    <property type="project" value="UniProtKB"/>
</dbReference>
<dbReference type="GO" id="GO:0051289">
    <property type="term" value="P:protein homotetramerization"/>
    <property type="evidence" value="ECO:0000314"/>
    <property type="project" value="UniProtKB"/>
</dbReference>
<dbReference type="GO" id="GO:0002087">
    <property type="term" value="P:regulation of respiratory gaseous exchange by nervous system process"/>
    <property type="evidence" value="ECO:0007669"/>
    <property type="project" value="Ensembl"/>
</dbReference>
<dbReference type="GO" id="GO:0001967">
    <property type="term" value="P:suckling behavior"/>
    <property type="evidence" value="ECO:0007669"/>
    <property type="project" value="Ensembl"/>
</dbReference>
<dbReference type="FunFam" id="1.10.238.210:FF:000001">
    <property type="entry name" value="Glutaminase kidney isoform, mitochondrial"/>
    <property type="match status" value="1"/>
</dbReference>
<dbReference type="FunFam" id="3.40.710.10:FF:000002">
    <property type="entry name" value="glutaminase kidney isoform, mitochondrial"/>
    <property type="match status" value="1"/>
</dbReference>
<dbReference type="FunFam" id="1.25.40.20:FF:000019">
    <property type="entry name" value="Glutaminase liver isoform, mitochondrial"/>
    <property type="match status" value="1"/>
</dbReference>
<dbReference type="Gene3D" id="1.10.238.210">
    <property type="match status" value="1"/>
</dbReference>
<dbReference type="Gene3D" id="1.25.40.20">
    <property type="entry name" value="Ankyrin repeat-containing domain"/>
    <property type="match status" value="1"/>
</dbReference>
<dbReference type="Gene3D" id="3.40.710.10">
    <property type="entry name" value="DD-peptidase/beta-lactamase superfamily"/>
    <property type="match status" value="1"/>
</dbReference>
<dbReference type="HAMAP" id="MF_00313">
    <property type="entry name" value="Glutaminase"/>
    <property type="match status" value="1"/>
</dbReference>
<dbReference type="InterPro" id="IPR002110">
    <property type="entry name" value="Ankyrin_rpt"/>
</dbReference>
<dbReference type="InterPro" id="IPR036770">
    <property type="entry name" value="Ankyrin_rpt-contain_sf"/>
</dbReference>
<dbReference type="InterPro" id="IPR012338">
    <property type="entry name" value="Beta-lactam/transpept-like"/>
</dbReference>
<dbReference type="InterPro" id="IPR015868">
    <property type="entry name" value="Glutaminase"/>
</dbReference>
<dbReference type="InterPro" id="IPR041541">
    <property type="entry name" value="Glutaminase_EF-hand"/>
</dbReference>
<dbReference type="NCBIfam" id="TIGR03814">
    <property type="entry name" value="Gln_ase"/>
    <property type="match status" value="1"/>
</dbReference>
<dbReference type="PANTHER" id="PTHR12544">
    <property type="entry name" value="GLUTAMINASE"/>
    <property type="match status" value="1"/>
</dbReference>
<dbReference type="PANTHER" id="PTHR12544:SF49">
    <property type="entry name" value="GLUTAMINASE KIDNEY ISOFORM, MITOCHONDRIAL"/>
    <property type="match status" value="1"/>
</dbReference>
<dbReference type="Pfam" id="PF12796">
    <property type="entry name" value="Ank_2"/>
    <property type="match status" value="1"/>
</dbReference>
<dbReference type="Pfam" id="PF17959">
    <property type="entry name" value="EF-hand_14"/>
    <property type="match status" value="1"/>
</dbReference>
<dbReference type="Pfam" id="PF04960">
    <property type="entry name" value="Glutaminase"/>
    <property type="match status" value="1"/>
</dbReference>
<dbReference type="SMART" id="SM00248">
    <property type="entry name" value="ANK"/>
    <property type="match status" value="2"/>
</dbReference>
<dbReference type="SUPFAM" id="SSF48403">
    <property type="entry name" value="Ankyrin repeat"/>
    <property type="match status" value="1"/>
</dbReference>
<dbReference type="SUPFAM" id="SSF56601">
    <property type="entry name" value="beta-lactamase/transpeptidase-like"/>
    <property type="match status" value="1"/>
</dbReference>
<dbReference type="PROSITE" id="PS50297">
    <property type="entry name" value="ANK_REP_REGION"/>
    <property type="match status" value="1"/>
</dbReference>
<dbReference type="PROSITE" id="PS50088">
    <property type="entry name" value="ANK_REPEAT"/>
    <property type="match status" value="1"/>
</dbReference>
<proteinExistence type="evidence at protein level"/>
<feature type="transit peptide" description="Mitochondrion" evidence="21">
    <location>
        <begin position="1"/>
        <end position="54"/>
    </location>
</feature>
<feature type="chain" id="PRO_0000011622" description="Glutaminase kidney isoform, mitochondrial 68 kDa chain">
    <location>
        <begin position="55"/>
        <end position="669"/>
    </location>
</feature>
<feature type="chain" id="PRO_0000447412" description="Glutaminase kidney isoform, mitochondrial 65 kDa chain" evidence="2">
    <location>
        <begin position="73"/>
        <end position="669"/>
    </location>
</feature>
<feature type="repeat" description="ANK 1">
    <location>
        <begin position="585"/>
        <end position="614"/>
    </location>
</feature>
<feature type="repeat" description="ANK 2">
    <location>
        <begin position="619"/>
        <end position="648"/>
    </location>
</feature>
<feature type="region of interest" description="Disordered" evidence="3">
    <location>
        <begin position="68"/>
        <end position="118"/>
    </location>
</feature>
<feature type="region of interest" description="Highly mobile activation loop" evidence="1">
    <location>
        <begin position="315"/>
        <end position="322"/>
    </location>
</feature>
<feature type="region of interest" description="Disordered" evidence="3">
    <location>
        <begin position="647"/>
        <end position="669"/>
    </location>
</feature>
<feature type="compositionally biased region" description="Pro residues" evidence="3">
    <location>
        <begin position="93"/>
        <end position="103"/>
    </location>
</feature>
<feature type="compositionally biased region" description="Basic and acidic residues" evidence="3">
    <location>
        <begin position="653"/>
        <end position="669"/>
    </location>
</feature>
<feature type="binding site" evidence="7 9 23 24 25 28 29">
    <location>
        <position position="286"/>
    </location>
    <ligand>
        <name>substrate</name>
    </ligand>
</feature>
<feature type="binding site" evidence="7 9 23 24 25 28 29">
    <location>
        <position position="335"/>
    </location>
    <ligand>
        <name>substrate</name>
    </ligand>
</feature>
<feature type="binding site" evidence="7 9 23 24 25 28 29">
    <location>
        <position position="381"/>
    </location>
    <ligand>
        <name>substrate</name>
    </ligand>
</feature>
<feature type="binding site" evidence="7 9 23 24 25 29">
    <location>
        <position position="388"/>
    </location>
    <ligand>
        <name>substrate</name>
    </ligand>
</feature>
<feature type="binding site" evidence="7 9 23 24 25 28 29">
    <location>
        <position position="414"/>
    </location>
    <ligand>
        <name>substrate</name>
    </ligand>
</feature>
<feature type="binding site" evidence="7 9 23 24 25 28 29">
    <location>
        <position position="466"/>
    </location>
    <ligand>
        <name>substrate</name>
    </ligand>
</feature>
<feature type="binding site" evidence="7 9 23 24 25 28 29">
    <location>
        <position position="484"/>
    </location>
    <ligand>
        <name>substrate</name>
    </ligand>
</feature>
<feature type="site" description="Cleavage; by MPP" evidence="2">
    <location>
        <begin position="72"/>
        <end position="73"/>
    </location>
</feature>
<feature type="modified residue" description="N6-succinyllysine" evidence="1">
    <location>
        <position position="130"/>
    </location>
</feature>
<feature type="modified residue" description="N6-succinyllysine" evidence="1">
    <location>
        <position position="164"/>
    </location>
</feature>
<feature type="modified residue" description="N6-acetyllysine" evidence="42">
    <location>
        <position position="311"/>
    </location>
</feature>
<feature type="modified residue" description="Phosphoserine" evidence="2">
    <location>
        <position position="652"/>
    </location>
</feature>
<feature type="splice variant" id="VSP_001765" description="In isoform 2." evidence="21">
    <original>ALKSTGLR</original>
    <variation>VSFYIFLS</variation>
    <location>
        <begin position="162"/>
        <end position="169"/>
    </location>
</feature>
<feature type="splice variant" id="VSP_001766" description="In isoform 2." evidence="21">
    <location>
        <begin position="170"/>
        <end position="669"/>
    </location>
</feature>
<feature type="splice variant" id="VSP_001767" description="In isoform 3." evidence="17">
    <original>VKSVINLLFAAYTGDVSALRRFALSAMDMEQRDYDSRTALHVAAAEGHVEVVKFLLEACKVNPFPKDRWNNTPMDEALHFGHHDVFKILQEYQVQYTPQGDSDNGKENQTVHKNLDGLL</original>
    <variation>HSFGPLDYESLQQELALKETVWKKVSPESNEDISTTVVYRMESLGEKS</variation>
    <location>
        <begin position="551"/>
        <end position="669"/>
    </location>
</feature>
<feature type="sequence variant" id="VAR_081971" description="In DEE71." evidence="15">
    <location>
        <begin position="81"/>
        <end position="669"/>
    </location>
</feature>
<feature type="sequence variant" id="VAR_049188" description="In dbSNP:rs16833035.">
    <original>A</original>
    <variation>P</variation>
    <location>
        <position position="254"/>
    </location>
</feature>
<feature type="sequence variant" id="VAR_081972" description="In DEE71; dbSNP:rs1558972120." evidence="15">
    <original>R</original>
    <variation>K</variation>
    <location>
        <position position="272"/>
    </location>
</feature>
<feature type="sequence variant" id="VAR_081973" description="In GDPAG; loss of enzyme activity; dbSNP:rs1558973667." evidence="16">
    <original>P</original>
    <variation>L</variation>
    <location>
        <position position="313"/>
    </location>
</feature>
<feature type="sequence variant" id="VAR_081974" description="In CASGID; increased enzyme activity; dbSNP:rs1558986214." evidence="14">
    <original>S</original>
    <variation>C</variation>
    <location>
        <position position="482"/>
    </location>
</feature>
<feature type="mutagenesis site" description="Loss of enzyme activity." evidence="10">
    <original>Y</original>
    <variation>A</variation>
    <location>
        <position position="249"/>
    </location>
</feature>
<feature type="mutagenesis site" description="Loss of enzyme activity." evidence="10">
    <original>S</original>
    <variation>A</variation>
    <location>
        <position position="286"/>
    </location>
</feature>
<feature type="mutagenesis site" description="Loss of enzyme activity." evidence="10">
    <original>K</original>
    <variation>A</variation>
    <location>
        <position position="289"/>
    </location>
</feature>
<feature type="mutagenesis site" description="No effect on catalytic activity. Loss of inhibition by BPTES; when associated with S-322." evidence="7">
    <original>F</original>
    <variation>Y</variation>
    <location>
        <position position="318"/>
    </location>
</feature>
<feature type="mutagenesis site" description="Decreased enzyme activity." evidence="9">
    <original>L</original>
    <variation>A</variation>
    <location>
        <position position="321"/>
    </location>
</feature>
<feature type="mutagenesis site" description="No effect on catalytic activity. Loss of inhibition by BPTES; when associated with Y-318." evidence="7">
    <original>F</original>
    <variation>S</variation>
    <location>
        <position position="322"/>
    </location>
</feature>
<feature type="mutagenesis site" description="Decreased enzyme activity." evidence="9">
    <original>L</original>
    <variation>A</variation>
    <location>
        <position position="323"/>
    </location>
</feature>
<feature type="mutagenesis site" description="Decreased enzyme activity." evidence="9">
    <original>Y</original>
    <variation>A</variation>
    <location>
        <position position="394"/>
    </location>
</feature>
<feature type="mutagenesis site" description="No effect on catalytic activity. Loss of inhibition by BPTES." evidence="7">
    <original>Y</original>
    <variation>L</variation>
    <location>
        <position position="394"/>
    </location>
</feature>
<feature type="mutagenesis site" description="Loss of enzyme activity." evidence="10">
    <original>Y</original>
    <variation>A</variation>
    <location>
        <position position="466"/>
    </location>
</feature>
<feature type="sequence conflict" description="In Ref. 1; AAF00090." evidence="21" ref="1">
    <original>G</original>
    <variation>S</variation>
    <location>
        <position position="6"/>
    </location>
</feature>
<feature type="sequence conflict" description="In Ref. 1; AAF00090." evidence="21" ref="1">
    <original>E</original>
    <variation>D</variation>
    <location>
        <position position="66"/>
    </location>
</feature>
<feature type="sequence conflict" description="In Ref. 4; AAG47842." evidence="21" ref="4">
    <original>F</original>
    <variation>L</variation>
    <location>
        <position position="219"/>
    </location>
</feature>
<feature type="sequence conflict" description="In Ref. 1; AAD47056." evidence="21" ref="1">
    <original>V</original>
    <variation>A</variation>
    <location>
        <position position="268"/>
    </location>
</feature>
<feature type="helix" evidence="53">
    <location>
        <begin position="140"/>
        <end position="147"/>
    </location>
</feature>
<feature type="strand" evidence="50">
    <location>
        <begin position="150"/>
        <end position="152"/>
    </location>
</feature>
<feature type="strand" evidence="44">
    <location>
        <begin position="153"/>
        <end position="155"/>
    </location>
</feature>
<feature type="helix" evidence="53">
    <location>
        <begin position="156"/>
        <end position="165"/>
    </location>
</feature>
<feature type="helix" evidence="53">
    <location>
        <begin position="173"/>
        <end position="175"/>
    </location>
</feature>
<feature type="helix" evidence="53">
    <location>
        <begin position="176"/>
        <end position="187"/>
    </location>
</feature>
<feature type="strand" evidence="50">
    <location>
        <begin position="189"/>
        <end position="191"/>
    </location>
</feature>
<feature type="strand" evidence="47">
    <location>
        <begin position="193"/>
        <end position="195"/>
    </location>
</feature>
<feature type="helix" evidence="53">
    <location>
        <begin position="197"/>
        <end position="204"/>
    </location>
</feature>
<feature type="helix" evidence="53">
    <location>
        <begin position="205"/>
        <end position="207"/>
    </location>
</feature>
<feature type="helix" evidence="53">
    <location>
        <begin position="208"/>
        <end position="215"/>
    </location>
</feature>
<feature type="strand" evidence="53">
    <location>
        <begin position="219"/>
        <end position="223"/>
    </location>
</feature>
<feature type="helix" evidence="53">
    <location>
        <begin position="224"/>
        <end position="239"/>
    </location>
</feature>
<feature type="strand" evidence="45">
    <location>
        <begin position="244"/>
        <end position="246"/>
    </location>
</feature>
<feature type="helix" evidence="53">
    <location>
        <begin position="251"/>
        <end position="254"/>
    </location>
</feature>
<feature type="strand" evidence="53">
    <location>
        <begin position="262"/>
        <end position="267"/>
    </location>
</feature>
<feature type="strand" evidence="53">
    <location>
        <begin position="272"/>
        <end position="277"/>
    </location>
</feature>
<feature type="helix" evidence="53">
    <location>
        <begin position="285"/>
        <end position="288"/>
    </location>
</feature>
<feature type="helix" evidence="53">
    <location>
        <begin position="289"/>
        <end position="300"/>
    </location>
</feature>
<feature type="helix" evidence="53">
    <location>
        <begin position="302"/>
        <end position="308"/>
    </location>
</feature>
<feature type="strand" evidence="43">
    <location>
        <begin position="315"/>
        <end position="317"/>
    </location>
</feature>
<feature type="helix" evidence="47">
    <location>
        <begin position="318"/>
        <end position="320"/>
    </location>
</feature>
<feature type="strand" evidence="49">
    <location>
        <begin position="327"/>
        <end position="330"/>
    </location>
</feature>
<feature type="strand" evidence="52">
    <location>
        <begin position="332"/>
        <end position="334"/>
    </location>
</feature>
<feature type="helix" evidence="53">
    <location>
        <begin position="335"/>
        <end position="342"/>
    </location>
</feature>
<feature type="turn" evidence="53">
    <location>
        <begin position="343"/>
        <end position="348"/>
    </location>
</feature>
<feature type="helix" evidence="53">
    <location>
        <begin position="351"/>
        <end position="365"/>
    </location>
</feature>
<feature type="turn" evidence="53">
    <location>
        <begin position="366"/>
        <end position="368"/>
    </location>
</feature>
<feature type="strand" evidence="53">
    <location>
        <begin position="371"/>
        <end position="373"/>
    </location>
</feature>
<feature type="helix" evidence="53">
    <location>
        <begin position="375"/>
        <end position="383"/>
    </location>
</feature>
<feature type="helix" evidence="53">
    <location>
        <begin position="386"/>
        <end position="397"/>
    </location>
</feature>
<feature type="helix" evidence="53">
    <location>
        <begin position="407"/>
        <end position="418"/>
    </location>
</feature>
<feature type="strand" evidence="53">
    <location>
        <begin position="420"/>
        <end position="422"/>
    </location>
</feature>
<feature type="helix" evidence="53">
    <location>
        <begin position="424"/>
        <end position="435"/>
    </location>
</feature>
<feature type="turn" evidence="53">
    <location>
        <begin position="436"/>
        <end position="438"/>
    </location>
</feature>
<feature type="turn" evidence="53">
    <location>
        <begin position="441"/>
        <end position="443"/>
    </location>
</feature>
<feature type="helix" evidence="53">
    <location>
        <begin position="450"/>
        <end position="463"/>
    </location>
</feature>
<feature type="helix" evidence="53">
    <location>
        <begin position="466"/>
        <end position="468"/>
    </location>
</feature>
<feature type="helix" evidence="53">
    <location>
        <begin position="469"/>
        <end position="475"/>
    </location>
</feature>
<feature type="strand" evidence="53">
    <location>
        <begin position="480"/>
        <end position="482"/>
    </location>
</feature>
<feature type="strand" evidence="53">
    <location>
        <begin position="486"/>
        <end position="492"/>
    </location>
</feature>
<feature type="turn" evidence="53">
    <location>
        <begin position="493"/>
        <end position="495"/>
    </location>
</feature>
<feature type="strand" evidence="53">
    <location>
        <begin position="496"/>
        <end position="501"/>
    </location>
</feature>
<feature type="strand" evidence="45">
    <location>
        <begin position="503"/>
        <end position="505"/>
    </location>
</feature>
<feature type="strand" evidence="53">
    <location>
        <begin position="509"/>
        <end position="511"/>
    </location>
</feature>
<feature type="helix" evidence="53">
    <location>
        <begin position="512"/>
        <end position="524"/>
    </location>
</feature>
<feature type="strand" evidence="48">
    <location>
        <begin position="533"/>
        <end position="535"/>
    </location>
</feature>
<feature type="helix" evidence="51">
    <location>
        <begin position="548"/>
        <end position="553"/>
    </location>
</feature>
<feature type="helix" evidence="46">
    <location>
        <begin position="554"/>
        <end position="563"/>
    </location>
</feature>
<feature type="helix" evidence="46">
    <location>
        <begin position="566"/>
        <end position="574"/>
    </location>
</feature>
<feature type="helix" evidence="46">
    <location>
        <begin position="589"/>
        <end position="596"/>
    </location>
</feature>
<feature type="helix" evidence="46">
    <location>
        <begin position="599"/>
        <end position="607"/>
    </location>
</feature>
<feature type="helix" evidence="46">
    <location>
        <begin position="623"/>
        <end position="629"/>
    </location>
</feature>
<feature type="helix" evidence="46">
    <location>
        <begin position="633"/>
        <end position="640"/>
    </location>
</feature>
<accession>O94925</accession>
<accession>Q9UL05</accession>
<accession>Q9UL06</accession>
<accession>Q9UL07</accession>
<accession>Q9UN40</accession>
<sequence>MMRLRGSGMLRDLLLRSPAGVSATLRRAQPLVTLCRRPRGGGRPAAGPAAAARLHPWWGGGGWPAEPLARGLSSSPSEILQELGKGSTHPQPGVSPPAAPAAPGPKDGPGETDAFGNSEGKELVASGENKIKQGLLPSLEDLLFYTIAEGQEKIPVHKFITALKSTGLRTSDPRLKECMDMLRLTLQTTSDGVMLDKDLFKKCVQSNIVLLTQAFRRKFVIPDFMSFTSHIDELYESAKKQSGGKVADYIPQLAKFSPDLWGVSVCTVDGQRHSTGDTKVPFCLQSCVKPLKYAIAVNDLGTEYVHRYVGKEPSGLRFNKLFLNEDDKPHNPMVNAGAIVVTSLIKQGVNNAEKFDYVMQFLNKMAGNEYVGFSNATFQSERESGDRNFAIGYYLKEKKCFPEGTDMVGILDFYFQLCSIEVTCESASVMAATLANGGFCPITGERVLSPEAVRNTLSLMHSCGMYDFSGQFAFHVGLPAKSGVAGGILLVVPNVMGMMCWSPPLDKMGNSVKGIHFCHDLVSLCNFHNYDNLRHFAKKLDPRREGGDQRVKSVINLLFAAYTGDVSALRRFALSAMDMEQRDYDSRTALHVAAAEGHVEVVKFLLEACKVNPFPKDRWNNTPMDEALHFGHHDVFKILQEYQVQYTPQGDSDNGKENQTVHKNLDGLL</sequence>
<comment type="function">
    <text evidence="14 15 16">Catalyzes the first reaction in the primary pathway for the renal catabolism of glutamine. Plays a role in maintaining acid-base homeostasis. Regulates the levels of the neurotransmitter glutamate, the main excitatory neurotransmitter in the brain (PubMed:30239721, PubMed:30575854, PubMed:30970188).</text>
</comment>
<comment type="function">
    <molecule>Isoform 2</molecule>
    <text evidence="4">Lacks catalytic activity.</text>
</comment>
<comment type="catalytic activity">
    <reaction evidence="7 9 10 11 12 13">
        <text>L-glutamine + H2O = L-glutamate + NH4(+)</text>
        <dbReference type="Rhea" id="RHEA:15889"/>
        <dbReference type="ChEBI" id="CHEBI:15377"/>
        <dbReference type="ChEBI" id="CHEBI:28938"/>
        <dbReference type="ChEBI" id="CHEBI:29985"/>
        <dbReference type="ChEBI" id="CHEBI:58359"/>
        <dbReference type="EC" id="3.5.1.2"/>
    </reaction>
</comment>
<comment type="activity regulation">
    <text evidence="7 9 10">Isoform 1 and isoform 3 are activated by phosphate. Inhibited by BPTES. BPTES binds between subunits and favors dissociation of the tetramer into dimers (PubMed:22049910). Inhibited by 6-diazo-5-oxo-L-norleucine (DON) (PubMed:24451979). Enzyme activity is stimulated by phosphorylation (PubMed:22538822).</text>
</comment>
<comment type="biophysicochemical properties">
    <kinetics>
        <KM evidence="7">1.9 mM for glutamine (isoform 1)</KM>
        <KM evidence="7">1.4 mM for glutamine (isoform 3)</KM>
    </kinetics>
</comment>
<comment type="subunit">
    <text evidence="1 5 7 9 11 12 13">Homotetramer, dimer of dimers (PubMed:22538822, PubMed:26988803, PubMed:28526749, PubMed:29317493). The tetramers can assemble into rod-like oligomers (in vitro), but the physiological significance of this is not clear (By similarity). Interacts with RAF1 and MAP2K2 (PubMed:22538822). Interacts with ATCAY; the interaction is direct and may control GLS localization, negatively regulating its activity.</text>
</comment>
<comment type="subcellular location">
    <molecule>Isoform 1</molecule>
    <subcellularLocation>
        <location evidence="2">Mitochondrion</location>
    </subcellularLocation>
    <subcellularLocation>
        <location evidence="8">Cytoplasm</location>
        <location evidence="8">Cytosol</location>
    </subcellularLocation>
    <text evidence="2">The 74-kDa cytosolic precursor is translocated into the mitochondria and processed via a 72-kDa intermediate to yield the mature 68- and 65-kDa subunits.</text>
</comment>
<comment type="subcellular location">
    <molecule>Isoform 3</molecule>
    <subcellularLocation>
        <location evidence="8">Mitochondrion</location>
    </subcellularLocation>
</comment>
<comment type="subcellular location">
    <molecule>Glutaminase kidney isoform, mitochondrial 68 kDa chain</molecule>
    <subcellularLocation>
        <location evidence="2">Mitochondrion matrix</location>
    </subcellularLocation>
    <text evidence="2">Produced by the proteolytic processing of the 74-kDa cytosolic precursor.</text>
</comment>
<comment type="subcellular location">
    <molecule>Glutaminase kidney isoform, mitochondrial 65 kDa chain</molecule>
    <subcellularLocation>
        <location evidence="2">Mitochondrion matrix</location>
    </subcellularLocation>
    <text evidence="2">Produced by the proteolytic processing of the 74-kDa cytosolic precursor.</text>
</comment>
<comment type="alternative products">
    <event type="alternative splicing"/>
    <isoform>
        <id>O94925-1</id>
        <name>1</name>
        <name evidence="18 19 20">KGA</name>
        <sequence type="displayed"/>
    </isoform>
    <isoform>
        <id>O94925-2</id>
        <name>2</name>
        <name>GAM</name>
        <sequence type="described" ref="VSP_001765 VSP_001766"/>
    </isoform>
    <isoform>
        <id>O94925-3</id>
        <name>3</name>
        <name evidence="18">Glutaminase C</name>
        <name evidence="18 20">GAC</name>
        <sequence type="described" ref="VSP_001767"/>
    </isoform>
</comment>
<comment type="tissue specificity">
    <text evidence="4">Isoform 1 and isoform 3 are detected in brain cortex. Isoform 3 is highly expressed in astrocytoma, ganglioglioma and ependymoma. Isoform 1 is highly expressed in brain and kidney, but not detected in liver. Isoform 3 is highly expressed in heart and pancreas, detected at lower levels in placenta, lung, pancreas and kidney, but is not detected in liver. Isoform 2 is expressed in cardiac and skeletal muscle.</text>
</comment>
<comment type="domain">
    <text evidence="12">The C-terminal ANK repeats prevent the assembly of the supra-tetrameric filaments.</text>
</comment>
<comment type="domain">
    <text evidence="1">A highly mobile activation loop at the dimer-dimer interface is important for enzyme activity.</text>
</comment>
<comment type="PTM">
    <text evidence="2">Synthesized as a 74-kDa cytosolic precursor which is proteolytically processed by the mitochondrial-processing peptidase (MPP) via a 72-kDa intermediate to yield the mature mitochondrial 68- and 65-kDa subunits.</text>
</comment>
<comment type="disease" evidence="15">
    <disease id="DI-05482">
        <name>Developmental and epileptic encephalopathy 71</name>
        <acronym>DEE71</acronym>
        <description>A form of epileptic encephalopathy, a heterogeneous group of severe early-onset epilepsies characterized by refractory seizures, neurodevelopmental impairment, and poor prognosis. Development is normal prior to seizure onset, after which cognitive and motor delays become apparent. DEE71 is an autosomal recessive form with onset at birth. Death occurs in first weeks of life.</description>
        <dbReference type="MIM" id="618328"/>
    </disease>
    <text>The disease is caused by variants affecting the gene represented in this entry.</text>
</comment>
<comment type="disease" evidence="14">
    <disease id="DI-05490">
        <name>CASGID syndrome</name>
        <acronym>CASGID</acronym>
        <description>An autosomal dominant disease characterized by infantile-onset cataract, erythematic subcutaneous nodules, profound developmental delay, self-injurious behavior, and intracerebral glutamate excess. Histopathologic analysis of skin lesions show deep perivascular and periglandular lymphohistiocytic infiltrates and pronounced leukocytoclasia at the surface of the dermis, focal vacuolar alterations, hyperkeratosis, and parakeratosis of the epidermis.</description>
        <dbReference type="MIM" id="618339"/>
    </disease>
    <text>The disease is caused by variants affecting the gene represented in this entry.</text>
</comment>
<comment type="disease" evidence="16">
    <disease id="DI-05561">
        <name>Global developmental delay, progressive ataxia, and elevated glutamine</name>
        <acronym>GDPAG</acronym>
        <description>An autosomal recessive disease characterized by early-onset delay in motor skills, delayed speech, progressive ataxia, and neurologic deterioration. Plasma glutamine is persistently elevated by a factor of 2.5 despite normal plasma ammonia levels.</description>
        <dbReference type="MIM" id="618412"/>
    </disease>
    <text>The disease is caused by variants affecting the gene represented in this entry.</text>
</comment>
<comment type="similarity">
    <text evidence="21">Belongs to the glutaminase family.</text>
</comment>
<comment type="caution">
    <text evidence="4 6 8 22">Isoform 3 is predicted to be expressed at very low levels due to a premature stop codon in the mRNA, leading to nonsense-mediated mRNA decay. Contrary to expectations, it has been shown to be well expressed, and the encoded protein is detected in mitochondria (PubMed:11015561, PubMed:17940881, PubMed:22228304).</text>
</comment>
<comment type="sequence caution" evidence="21">
    <conflict type="erroneous initiation">
        <sequence resource="EMBL-CDS" id="BAA74861"/>
    </conflict>
    <text>Extended N-terminus.</text>
</comment>
<protein>
    <recommendedName>
        <fullName>Glutaminase kidney isoform, mitochondrial</fullName>
        <shortName>GLS</shortName>
        <ecNumber evidence="7 9 10 11 12 13">3.5.1.2</ecNumber>
    </recommendedName>
    <alternativeName>
        <fullName>K-glutaminase</fullName>
    </alternativeName>
    <alternativeName>
        <fullName>L-glutamine amidohydrolase</fullName>
    </alternativeName>
    <component>
        <recommendedName>
            <fullName evidence="2">Glutaminase kidney isoform, mitochondrial 68 kDa chain</fullName>
        </recommendedName>
    </component>
    <component>
        <recommendedName>
            <fullName evidence="2">Glutaminase kidney isoform, mitochondrial 65 kDa chain</fullName>
        </recommendedName>
    </component>
</protein>